<gene>
    <name evidence="1" type="primary">rnhB</name>
    <name type="ordered locus">Mhun_1216</name>
</gene>
<proteinExistence type="inferred from homology"/>
<comment type="function">
    <text evidence="1">Endonuclease that specifically degrades the RNA of RNA-DNA hybrids.</text>
</comment>
<comment type="catalytic activity">
    <reaction evidence="1">
        <text>Endonucleolytic cleavage to 5'-phosphomonoester.</text>
        <dbReference type="EC" id="3.1.26.4"/>
    </reaction>
</comment>
<comment type="cofactor">
    <cofactor evidence="1">
        <name>Mn(2+)</name>
        <dbReference type="ChEBI" id="CHEBI:29035"/>
    </cofactor>
    <cofactor evidence="1">
        <name>Mg(2+)</name>
        <dbReference type="ChEBI" id="CHEBI:18420"/>
    </cofactor>
    <text evidence="1">Manganese or magnesium. Binds 1 divalent metal ion per monomer in the absence of substrate. May bind a second metal ion after substrate binding.</text>
</comment>
<comment type="subcellular location">
    <subcellularLocation>
        <location evidence="1">Cytoplasm</location>
    </subcellularLocation>
</comment>
<comment type="similarity">
    <text evidence="1">Belongs to the RNase HII family.</text>
</comment>
<name>RNH2_METHJ</name>
<organism>
    <name type="scientific">Methanospirillum hungatei JF-1 (strain ATCC 27890 / DSM 864 / NBRC 100397 / JF-1)</name>
    <dbReference type="NCBI Taxonomy" id="323259"/>
    <lineage>
        <taxon>Archaea</taxon>
        <taxon>Methanobacteriati</taxon>
        <taxon>Methanobacteriota</taxon>
        <taxon>Stenosarchaea group</taxon>
        <taxon>Methanomicrobia</taxon>
        <taxon>Methanomicrobiales</taxon>
        <taxon>Methanospirillaceae</taxon>
        <taxon>Methanospirillum</taxon>
    </lineage>
</organism>
<feature type="chain" id="PRO_0000236281" description="Ribonuclease HII">
    <location>
        <begin position="1"/>
        <end position="212"/>
    </location>
</feature>
<feature type="domain" description="RNase H type-2" evidence="2">
    <location>
        <begin position="1"/>
        <end position="206"/>
    </location>
</feature>
<feature type="binding site" evidence="1">
    <location>
        <position position="6"/>
    </location>
    <ligand>
        <name>a divalent metal cation</name>
        <dbReference type="ChEBI" id="CHEBI:60240"/>
    </ligand>
</feature>
<feature type="binding site" evidence="1">
    <location>
        <position position="7"/>
    </location>
    <ligand>
        <name>a divalent metal cation</name>
        <dbReference type="ChEBI" id="CHEBI:60240"/>
    </ligand>
</feature>
<feature type="binding site" evidence="1">
    <location>
        <position position="101"/>
    </location>
    <ligand>
        <name>a divalent metal cation</name>
        <dbReference type="ChEBI" id="CHEBI:60240"/>
    </ligand>
</feature>
<accession>Q2FP80</accession>
<dbReference type="EC" id="3.1.26.4" evidence="1"/>
<dbReference type="EMBL" id="CP000254">
    <property type="protein sequence ID" value="ABD40963.1"/>
    <property type="molecule type" value="Genomic_DNA"/>
</dbReference>
<dbReference type="RefSeq" id="WP_011448240.1">
    <property type="nucleotide sequence ID" value="NC_007796.1"/>
</dbReference>
<dbReference type="SMR" id="Q2FP80"/>
<dbReference type="FunCoup" id="Q2FP80">
    <property type="interactions" value="113"/>
</dbReference>
<dbReference type="STRING" id="323259.Mhun_1216"/>
<dbReference type="EnsemblBacteria" id="ABD40963">
    <property type="protein sequence ID" value="ABD40963"/>
    <property type="gene ID" value="Mhun_1216"/>
</dbReference>
<dbReference type="GeneID" id="3924248"/>
<dbReference type="KEGG" id="mhu:Mhun_1216"/>
<dbReference type="eggNOG" id="arCOG04121">
    <property type="taxonomic scope" value="Archaea"/>
</dbReference>
<dbReference type="HOGENOM" id="CLU_036532_0_4_2"/>
<dbReference type="InParanoid" id="Q2FP80"/>
<dbReference type="OrthoDB" id="33866at2157"/>
<dbReference type="Proteomes" id="UP000001941">
    <property type="component" value="Chromosome"/>
</dbReference>
<dbReference type="GO" id="GO:0005737">
    <property type="term" value="C:cytoplasm"/>
    <property type="evidence" value="ECO:0007669"/>
    <property type="project" value="UniProtKB-SubCell"/>
</dbReference>
<dbReference type="GO" id="GO:0032299">
    <property type="term" value="C:ribonuclease H2 complex"/>
    <property type="evidence" value="ECO:0007669"/>
    <property type="project" value="TreeGrafter"/>
</dbReference>
<dbReference type="GO" id="GO:0030145">
    <property type="term" value="F:manganese ion binding"/>
    <property type="evidence" value="ECO:0007669"/>
    <property type="project" value="UniProtKB-UniRule"/>
</dbReference>
<dbReference type="GO" id="GO:0003723">
    <property type="term" value="F:RNA binding"/>
    <property type="evidence" value="ECO:0007669"/>
    <property type="project" value="InterPro"/>
</dbReference>
<dbReference type="GO" id="GO:0004523">
    <property type="term" value="F:RNA-DNA hybrid ribonuclease activity"/>
    <property type="evidence" value="ECO:0007669"/>
    <property type="project" value="UniProtKB-UniRule"/>
</dbReference>
<dbReference type="GO" id="GO:0043137">
    <property type="term" value="P:DNA replication, removal of RNA primer"/>
    <property type="evidence" value="ECO:0007669"/>
    <property type="project" value="TreeGrafter"/>
</dbReference>
<dbReference type="GO" id="GO:0006298">
    <property type="term" value="P:mismatch repair"/>
    <property type="evidence" value="ECO:0007669"/>
    <property type="project" value="TreeGrafter"/>
</dbReference>
<dbReference type="CDD" id="cd07180">
    <property type="entry name" value="RNase_HII_archaea_like"/>
    <property type="match status" value="1"/>
</dbReference>
<dbReference type="FunFam" id="1.10.10.460:FF:000001">
    <property type="entry name" value="Ribonuclease"/>
    <property type="match status" value="1"/>
</dbReference>
<dbReference type="Gene3D" id="3.30.420.10">
    <property type="entry name" value="Ribonuclease H-like superfamily/Ribonuclease H"/>
    <property type="match status" value="1"/>
</dbReference>
<dbReference type="Gene3D" id="1.10.10.460">
    <property type="entry name" value="Ribonuclease hii. Domain 2"/>
    <property type="match status" value="1"/>
</dbReference>
<dbReference type="HAMAP" id="MF_00052_A">
    <property type="entry name" value="RNase_HII_A"/>
    <property type="match status" value="1"/>
</dbReference>
<dbReference type="InterPro" id="IPR004649">
    <property type="entry name" value="RNase_H2_suA"/>
</dbReference>
<dbReference type="InterPro" id="IPR001352">
    <property type="entry name" value="RNase_HII/HIII"/>
</dbReference>
<dbReference type="InterPro" id="IPR024567">
    <property type="entry name" value="RNase_HII/HIII_dom"/>
</dbReference>
<dbReference type="InterPro" id="IPR020787">
    <property type="entry name" value="RNase_HII_arc"/>
</dbReference>
<dbReference type="InterPro" id="IPR023160">
    <property type="entry name" value="RNase_HII_hlx-loop-hlx_cap_dom"/>
</dbReference>
<dbReference type="InterPro" id="IPR012337">
    <property type="entry name" value="RNaseH-like_sf"/>
</dbReference>
<dbReference type="InterPro" id="IPR036397">
    <property type="entry name" value="RNaseH_sf"/>
</dbReference>
<dbReference type="NCBIfam" id="TIGR00729">
    <property type="entry name" value="ribonuclease HII"/>
    <property type="match status" value="1"/>
</dbReference>
<dbReference type="PANTHER" id="PTHR10954:SF23">
    <property type="entry name" value="RIBONUCLEASE"/>
    <property type="match status" value="1"/>
</dbReference>
<dbReference type="PANTHER" id="PTHR10954">
    <property type="entry name" value="RIBONUCLEASE H2 SUBUNIT A"/>
    <property type="match status" value="1"/>
</dbReference>
<dbReference type="Pfam" id="PF01351">
    <property type="entry name" value="RNase_HII"/>
    <property type="match status" value="1"/>
</dbReference>
<dbReference type="SUPFAM" id="SSF53098">
    <property type="entry name" value="Ribonuclease H-like"/>
    <property type="match status" value="1"/>
</dbReference>
<dbReference type="PROSITE" id="PS51975">
    <property type="entry name" value="RNASE_H_2"/>
    <property type="match status" value="1"/>
</dbReference>
<protein>
    <recommendedName>
        <fullName evidence="1">Ribonuclease HII</fullName>
        <shortName evidence="1">RNase HII</shortName>
        <ecNumber evidence="1">3.1.26.4</ecNumber>
    </recommendedName>
</protein>
<evidence type="ECO:0000255" key="1">
    <source>
        <dbReference type="HAMAP-Rule" id="MF_00052"/>
    </source>
</evidence>
<evidence type="ECO:0000255" key="2">
    <source>
        <dbReference type="PROSITE-ProRule" id="PRU01319"/>
    </source>
</evidence>
<sequence length="212" mass="23272">MICGVDEAGKGSVLGPMVVAAVGCTDMDDLIALGVADSKKLSSKSREKISADIKAQFPFSIVIRTAHDIDELRRTMTMNEIVARSHAEALIPLNCTCAYVDACDVSEERYEETVSSFSPPDCTIVARHKADSLFPPVSAASIIAKVERDRIIEELSKEYGDIGSGYPSDPVTITYLTKYIRHHNQPPVIARSSWETVKNLLHQKNQSSLLDF</sequence>
<keyword id="KW-0963">Cytoplasm</keyword>
<keyword id="KW-0255">Endonuclease</keyword>
<keyword id="KW-0378">Hydrolase</keyword>
<keyword id="KW-0464">Manganese</keyword>
<keyword id="KW-0479">Metal-binding</keyword>
<keyword id="KW-0540">Nuclease</keyword>
<keyword id="KW-1185">Reference proteome</keyword>
<reference key="1">
    <citation type="journal article" date="2016" name="Stand. Genomic Sci.">
        <title>Complete genome sequence of Methanospirillum hungatei type strain JF1.</title>
        <authorList>
            <person name="Gunsalus R.P."/>
            <person name="Cook L.E."/>
            <person name="Crable B."/>
            <person name="Rohlin L."/>
            <person name="McDonald E."/>
            <person name="Mouttaki H."/>
            <person name="Sieber J.R."/>
            <person name="Poweleit N."/>
            <person name="Zhou H."/>
            <person name="Lapidus A.L."/>
            <person name="Daligault H.E."/>
            <person name="Land M."/>
            <person name="Gilna P."/>
            <person name="Ivanova N."/>
            <person name="Kyrpides N."/>
            <person name="Culley D.E."/>
            <person name="McInerney M.J."/>
        </authorList>
    </citation>
    <scope>NUCLEOTIDE SEQUENCE [LARGE SCALE GENOMIC DNA]</scope>
    <source>
        <strain>ATCC 27890 / DSM 864 / NBRC 100397 / JF-1</strain>
    </source>
</reference>